<proteinExistence type="evidence at transcript level"/>
<accession>Q99NE9</accession>
<accession>Q8CFL2</accession>
<accession>Q99NE8</accession>
<protein>
    <recommendedName>
        <fullName>Pre-B-cell leukemia transcription factor 4</fullName>
    </recommendedName>
    <alternativeName>
        <fullName>Homeobox protein PBX4</fullName>
    </alternativeName>
</protein>
<feature type="chain" id="PRO_0000049242" description="Pre-B-cell leukemia transcription factor 4">
    <location>
        <begin position="1"/>
        <end position="378"/>
    </location>
</feature>
<feature type="domain" description="PBC" evidence="2">
    <location>
        <begin position="22"/>
        <end position="214"/>
    </location>
</feature>
<feature type="DNA-binding region" description="Homeobox; TALE-type" evidence="1">
    <location>
        <begin position="215"/>
        <end position="277"/>
    </location>
</feature>
<feature type="region of interest" description="Disordered" evidence="3">
    <location>
        <begin position="1"/>
        <end position="24"/>
    </location>
</feature>
<feature type="region of interest" description="PBC-A" evidence="2">
    <location>
        <begin position="29"/>
        <end position="107"/>
    </location>
</feature>
<feature type="region of interest" description="Disordered" evidence="3">
    <location>
        <begin position="100"/>
        <end position="125"/>
    </location>
</feature>
<feature type="region of interest" description="PBC-B" evidence="2">
    <location>
        <begin position="110"/>
        <end position="214"/>
    </location>
</feature>
<feature type="region of interest" description="Disordered" evidence="3">
    <location>
        <begin position="291"/>
        <end position="320"/>
    </location>
</feature>
<feature type="region of interest" description="Disordered" evidence="3">
    <location>
        <begin position="355"/>
        <end position="378"/>
    </location>
</feature>
<feature type="compositionally biased region" description="Pro residues" evidence="3">
    <location>
        <begin position="1"/>
        <end position="15"/>
    </location>
</feature>
<feature type="compositionally biased region" description="Low complexity" evidence="3">
    <location>
        <begin position="109"/>
        <end position="120"/>
    </location>
</feature>
<feature type="compositionally biased region" description="Low complexity" evidence="3">
    <location>
        <begin position="356"/>
        <end position="370"/>
    </location>
</feature>
<feature type="splice variant" id="VSP_008617" description="In isoform 2." evidence="5 6">
    <original>AV</original>
    <variation>GL</variation>
    <location>
        <begin position="73"/>
        <end position="74"/>
    </location>
</feature>
<feature type="splice variant" id="VSP_008618" description="In isoform 2." evidence="5 6">
    <location>
        <begin position="75"/>
        <end position="378"/>
    </location>
</feature>
<gene>
    <name type="primary">Pbx4</name>
</gene>
<dbReference type="EMBL" id="AJ300183">
    <property type="protein sequence ID" value="CAC28213.1"/>
    <property type="molecule type" value="mRNA"/>
</dbReference>
<dbReference type="EMBL" id="AJ300184">
    <property type="protein sequence ID" value="CAC28214.1"/>
    <property type="molecule type" value="mRNA"/>
</dbReference>
<dbReference type="EMBL" id="AK010506">
    <property type="protein sequence ID" value="BAC25299.1"/>
    <property type="molecule type" value="mRNA"/>
</dbReference>
<dbReference type="EMBL" id="BC032875">
    <property type="protein sequence ID" value="AAH32875.1"/>
    <property type="molecule type" value="mRNA"/>
</dbReference>
<dbReference type="CCDS" id="CCDS22352.1">
    <molecule id="Q99NE9-1"/>
</dbReference>
<dbReference type="RefSeq" id="NP_001020125.1">
    <molecule id="Q99NE9-1"/>
    <property type="nucleotide sequence ID" value="NM_001024954.2"/>
</dbReference>
<dbReference type="RefSeq" id="XP_006509865.1">
    <property type="nucleotide sequence ID" value="XM_006509802.3"/>
</dbReference>
<dbReference type="RefSeq" id="XP_006509866.1">
    <property type="nucleotide sequence ID" value="XM_006509803.1"/>
</dbReference>
<dbReference type="SMR" id="Q99NE9"/>
<dbReference type="BioGRID" id="219800">
    <property type="interactions" value="9"/>
</dbReference>
<dbReference type="FunCoup" id="Q99NE9">
    <property type="interactions" value="86"/>
</dbReference>
<dbReference type="IntAct" id="Q99NE9">
    <property type="interactions" value="9"/>
</dbReference>
<dbReference type="STRING" id="10090.ENSMUSP00000080219"/>
<dbReference type="GlyGen" id="Q99NE9">
    <property type="glycosylation" value="2 sites"/>
</dbReference>
<dbReference type="PhosphoSitePlus" id="Q99NE9"/>
<dbReference type="PaxDb" id="10090-ENSMUSP00000080219"/>
<dbReference type="ProteomicsDB" id="294024">
    <molecule id="Q99NE9-1"/>
</dbReference>
<dbReference type="ProteomicsDB" id="294025">
    <molecule id="Q99NE9-2"/>
</dbReference>
<dbReference type="Antibodypedia" id="28510">
    <property type="antibodies" value="91 antibodies from 23 providers"/>
</dbReference>
<dbReference type="DNASU" id="80720"/>
<dbReference type="Ensembl" id="ENSMUST00000081503.13">
    <molecule id="Q99NE9-1"/>
    <property type="protein sequence ID" value="ENSMUSP00000080219.6"/>
    <property type="gene ID" value="ENSMUSG00000031860.18"/>
</dbReference>
<dbReference type="Ensembl" id="ENSMUST00000132899.8">
    <molecule id="Q99NE9-2"/>
    <property type="protein sequence ID" value="ENSMUSP00000118287.2"/>
    <property type="gene ID" value="ENSMUSG00000031860.18"/>
</dbReference>
<dbReference type="GeneID" id="80720"/>
<dbReference type="KEGG" id="mmu:80720"/>
<dbReference type="UCSC" id="uc009lxx.1">
    <molecule id="Q99NE9-1"/>
    <property type="organism name" value="mouse"/>
</dbReference>
<dbReference type="AGR" id="MGI:1931321"/>
<dbReference type="CTD" id="80714"/>
<dbReference type="MGI" id="MGI:1931321">
    <property type="gene designation" value="Pbx4"/>
</dbReference>
<dbReference type="VEuPathDB" id="HostDB:ENSMUSG00000031860"/>
<dbReference type="eggNOG" id="KOG0774">
    <property type="taxonomic scope" value="Eukaryota"/>
</dbReference>
<dbReference type="GeneTree" id="ENSGT00940000162643"/>
<dbReference type="HOGENOM" id="CLU_041153_0_1_1"/>
<dbReference type="InParanoid" id="Q99NE9"/>
<dbReference type="OMA" id="IYMGKTA"/>
<dbReference type="OrthoDB" id="4187154at2759"/>
<dbReference type="PhylomeDB" id="Q99NE9"/>
<dbReference type="TreeFam" id="TF314340"/>
<dbReference type="BioGRID-ORCS" id="80720">
    <property type="hits" value="3 hits in 79 CRISPR screens"/>
</dbReference>
<dbReference type="ChiTaRS" id="Pbx4">
    <property type="organism name" value="mouse"/>
</dbReference>
<dbReference type="PRO" id="PR:Q99NE9"/>
<dbReference type="Proteomes" id="UP000000589">
    <property type="component" value="Chromosome 8"/>
</dbReference>
<dbReference type="RNAct" id="Q99NE9">
    <property type="molecule type" value="protein"/>
</dbReference>
<dbReference type="Bgee" id="ENSMUSG00000031860">
    <property type="expression patterns" value="Expressed in spermatocyte and 91 other cell types or tissues"/>
</dbReference>
<dbReference type="ExpressionAtlas" id="Q99NE9">
    <property type="expression patterns" value="baseline and differential"/>
</dbReference>
<dbReference type="GO" id="GO:0005634">
    <property type="term" value="C:nucleus"/>
    <property type="evidence" value="ECO:0000305"/>
    <property type="project" value="BHF-UCL"/>
</dbReference>
<dbReference type="GO" id="GO:0001741">
    <property type="term" value="C:XY body"/>
    <property type="evidence" value="ECO:0000314"/>
    <property type="project" value="MGI"/>
</dbReference>
<dbReference type="GO" id="GO:0003700">
    <property type="term" value="F:DNA-binding transcription factor activity"/>
    <property type="evidence" value="ECO:0007669"/>
    <property type="project" value="InterPro"/>
</dbReference>
<dbReference type="GO" id="GO:0043565">
    <property type="term" value="F:sequence-specific DNA binding"/>
    <property type="evidence" value="ECO:0000314"/>
    <property type="project" value="BHF-UCL"/>
</dbReference>
<dbReference type="GO" id="GO:0045893">
    <property type="term" value="P:positive regulation of DNA-templated transcription"/>
    <property type="evidence" value="ECO:0000305"/>
    <property type="project" value="BHF-UCL"/>
</dbReference>
<dbReference type="GO" id="GO:0006357">
    <property type="term" value="P:regulation of transcription by RNA polymerase II"/>
    <property type="evidence" value="ECO:0000305"/>
    <property type="project" value="BHF-UCL"/>
</dbReference>
<dbReference type="CDD" id="cd00086">
    <property type="entry name" value="homeodomain"/>
    <property type="match status" value="1"/>
</dbReference>
<dbReference type="FunFam" id="1.10.10.60:FF:000008">
    <property type="entry name" value="Pre-B-cell leukemia transcription factor 1"/>
    <property type="match status" value="1"/>
</dbReference>
<dbReference type="Gene3D" id="1.10.10.60">
    <property type="entry name" value="Homeodomain-like"/>
    <property type="match status" value="1"/>
</dbReference>
<dbReference type="InterPro" id="IPR001356">
    <property type="entry name" value="HD"/>
</dbReference>
<dbReference type="InterPro" id="IPR009057">
    <property type="entry name" value="Homeodomain-like_sf"/>
</dbReference>
<dbReference type="InterPro" id="IPR008422">
    <property type="entry name" value="KN_HD"/>
</dbReference>
<dbReference type="InterPro" id="IPR005542">
    <property type="entry name" value="PBX_PBC_dom"/>
</dbReference>
<dbReference type="InterPro" id="IPR050224">
    <property type="entry name" value="TALE_homeobox"/>
</dbReference>
<dbReference type="PANTHER" id="PTHR11850">
    <property type="entry name" value="HOMEOBOX PROTEIN TRANSCRIPTION FACTORS"/>
    <property type="match status" value="1"/>
</dbReference>
<dbReference type="Pfam" id="PF05920">
    <property type="entry name" value="Homeobox_KN"/>
    <property type="match status" value="1"/>
</dbReference>
<dbReference type="Pfam" id="PF03792">
    <property type="entry name" value="PBC"/>
    <property type="match status" value="1"/>
</dbReference>
<dbReference type="SMART" id="SM00389">
    <property type="entry name" value="HOX"/>
    <property type="match status" value="1"/>
</dbReference>
<dbReference type="SUPFAM" id="SSF46689">
    <property type="entry name" value="Homeodomain-like"/>
    <property type="match status" value="1"/>
</dbReference>
<dbReference type="PROSITE" id="PS50071">
    <property type="entry name" value="HOMEOBOX_2"/>
    <property type="match status" value="1"/>
</dbReference>
<dbReference type="PROSITE" id="PS51978">
    <property type="entry name" value="PBC"/>
    <property type="match status" value="1"/>
</dbReference>
<comment type="subcellular location">
    <subcellularLocation>
        <location evidence="1">Nucleus</location>
    </subcellularLocation>
</comment>
<comment type="alternative products">
    <event type="alternative splicing"/>
    <isoform>
        <id>Q99NE9-1</id>
        <name>1</name>
        <sequence type="displayed"/>
    </isoform>
    <isoform>
        <id>Q99NE9-2</id>
        <name>2</name>
        <name>Truncated</name>
        <sequence type="described" ref="VSP_008617 VSP_008618"/>
    </isoform>
</comment>
<comment type="tissue specificity">
    <text evidence="4">Almost exclusively expressed in testis.</text>
</comment>
<comment type="developmental stage">
    <text>Expressed in spermatocytes in the pachytene stage of the first meiotic prophase.</text>
</comment>
<comment type="similarity">
    <text evidence="7">Belongs to the TALE/PBX homeobox family.</text>
</comment>
<organism>
    <name type="scientific">Mus musculus</name>
    <name type="common">Mouse</name>
    <dbReference type="NCBI Taxonomy" id="10090"/>
    <lineage>
        <taxon>Eukaryota</taxon>
        <taxon>Metazoa</taxon>
        <taxon>Chordata</taxon>
        <taxon>Craniata</taxon>
        <taxon>Vertebrata</taxon>
        <taxon>Euteleostomi</taxon>
        <taxon>Mammalia</taxon>
        <taxon>Eutheria</taxon>
        <taxon>Euarchontoglires</taxon>
        <taxon>Glires</taxon>
        <taxon>Rodentia</taxon>
        <taxon>Myomorpha</taxon>
        <taxon>Muroidea</taxon>
        <taxon>Muridae</taxon>
        <taxon>Murinae</taxon>
        <taxon>Mus</taxon>
        <taxon>Mus</taxon>
    </lineage>
</organism>
<evidence type="ECO:0000255" key="1">
    <source>
        <dbReference type="PROSITE-ProRule" id="PRU00108"/>
    </source>
</evidence>
<evidence type="ECO:0000255" key="2">
    <source>
        <dbReference type="PROSITE-ProRule" id="PRU01322"/>
    </source>
</evidence>
<evidence type="ECO:0000256" key="3">
    <source>
        <dbReference type="SAM" id="MobiDB-lite"/>
    </source>
</evidence>
<evidence type="ECO:0000269" key="4">
    <source>
    </source>
</evidence>
<evidence type="ECO:0000303" key="5">
    <source>
    </source>
</evidence>
<evidence type="ECO:0000303" key="6">
    <source>
    </source>
</evidence>
<evidence type="ECO:0000305" key="7"/>
<reference key="1">
    <citation type="journal article" date="2001" name="Mech. Dev.">
        <title>Pbx4, a new Pbx family member on mouse chromosome 8 is expressed during spermatogenesis.</title>
        <authorList>
            <person name="Wagner K."/>
            <person name="Mincheva A."/>
            <person name="Korn B."/>
            <person name="Lichter P."/>
            <person name="Poepperl H."/>
        </authorList>
    </citation>
    <scope>NUCLEOTIDE SEQUENCE [MRNA] OF 1-296 (ISOFORMS 1 AND 2)</scope>
    <scope>TISSUE SPECIFICITY</scope>
    <source>
        <strain>FVB/N</strain>
    </source>
</reference>
<reference key="2">
    <citation type="journal article" date="2005" name="Science">
        <title>The transcriptional landscape of the mammalian genome.</title>
        <authorList>
            <person name="Carninci P."/>
            <person name="Kasukawa T."/>
            <person name="Katayama S."/>
            <person name="Gough J."/>
            <person name="Frith M.C."/>
            <person name="Maeda N."/>
            <person name="Oyama R."/>
            <person name="Ravasi T."/>
            <person name="Lenhard B."/>
            <person name="Wells C."/>
            <person name="Kodzius R."/>
            <person name="Shimokawa K."/>
            <person name="Bajic V.B."/>
            <person name="Brenner S.E."/>
            <person name="Batalov S."/>
            <person name="Forrest A.R."/>
            <person name="Zavolan M."/>
            <person name="Davis M.J."/>
            <person name="Wilming L.G."/>
            <person name="Aidinis V."/>
            <person name="Allen J.E."/>
            <person name="Ambesi-Impiombato A."/>
            <person name="Apweiler R."/>
            <person name="Aturaliya R.N."/>
            <person name="Bailey T.L."/>
            <person name="Bansal M."/>
            <person name="Baxter L."/>
            <person name="Beisel K.W."/>
            <person name="Bersano T."/>
            <person name="Bono H."/>
            <person name="Chalk A.M."/>
            <person name="Chiu K.P."/>
            <person name="Choudhary V."/>
            <person name="Christoffels A."/>
            <person name="Clutterbuck D.R."/>
            <person name="Crowe M.L."/>
            <person name="Dalla E."/>
            <person name="Dalrymple B.P."/>
            <person name="de Bono B."/>
            <person name="Della Gatta G."/>
            <person name="di Bernardo D."/>
            <person name="Down T."/>
            <person name="Engstrom P."/>
            <person name="Fagiolini M."/>
            <person name="Faulkner G."/>
            <person name="Fletcher C.F."/>
            <person name="Fukushima T."/>
            <person name="Furuno M."/>
            <person name="Futaki S."/>
            <person name="Gariboldi M."/>
            <person name="Georgii-Hemming P."/>
            <person name="Gingeras T.R."/>
            <person name="Gojobori T."/>
            <person name="Green R.E."/>
            <person name="Gustincich S."/>
            <person name="Harbers M."/>
            <person name="Hayashi Y."/>
            <person name="Hensch T.K."/>
            <person name="Hirokawa N."/>
            <person name="Hill D."/>
            <person name="Huminiecki L."/>
            <person name="Iacono M."/>
            <person name="Ikeo K."/>
            <person name="Iwama A."/>
            <person name="Ishikawa T."/>
            <person name="Jakt M."/>
            <person name="Kanapin A."/>
            <person name="Katoh M."/>
            <person name="Kawasawa Y."/>
            <person name="Kelso J."/>
            <person name="Kitamura H."/>
            <person name="Kitano H."/>
            <person name="Kollias G."/>
            <person name="Krishnan S.P."/>
            <person name="Kruger A."/>
            <person name="Kummerfeld S.K."/>
            <person name="Kurochkin I.V."/>
            <person name="Lareau L.F."/>
            <person name="Lazarevic D."/>
            <person name="Lipovich L."/>
            <person name="Liu J."/>
            <person name="Liuni S."/>
            <person name="McWilliam S."/>
            <person name="Madan Babu M."/>
            <person name="Madera M."/>
            <person name="Marchionni L."/>
            <person name="Matsuda H."/>
            <person name="Matsuzawa S."/>
            <person name="Miki H."/>
            <person name="Mignone F."/>
            <person name="Miyake S."/>
            <person name="Morris K."/>
            <person name="Mottagui-Tabar S."/>
            <person name="Mulder N."/>
            <person name="Nakano N."/>
            <person name="Nakauchi H."/>
            <person name="Ng P."/>
            <person name="Nilsson R."/>
            <person name="Nishiguchi S."/>
            <person name="Nishikawa S."/>
            <person name="Nori F."/>
            <person name="Ohara O."/>
            <person name="Okazaki Y."/>
            <person name="Orlando V."/>
            <person name="Pang K.C."/>
            <person name="Pavan W.J."/>
            <person name="Pavesi G."/>
            <person name="Pesole G."/>
            <person name="Petrovsky N."/>
            <person name="Piazza S."/>
            <person name="Reed J."/>
            <person name="Reid J.F."/>
            <person name="Ring B.Z."/>
            <person name="Ringwald M."/>
            <person name="Rost B."/>
            <person name="Ruan Y."/>
            <person name="Salzberg S.L."/>
            <person name="Sandelin A."/>
            <person name="Schneider C."/>
            <person name="Schoenbach C."/>
            <person name="Sekiguchi K."/>
            <person name="Semple C.A."/>
            <person name="Seno S."/>
            <person name="Sessa L."/>
            <person name="Sheng Y."/>
            <person name="Shibata Y."/>
            <person name="Shimada H."/>
            <person name="Shimada K."/>
            <person name="Silva D."/>
            <person name="Sinclair B."/>
            <person name="Sperling S."/>
            <person name="Stupka E."/>
            <person name="Sugiura K."/>
            <person name="Sultana R."/>
            <person name="Takenaka Y."/>
            <person name="Taki K."/>
            <person name="Tammoja K."/>
            <person name="Tan S.L."/>
            <person name="Tang S."/>
            <person name="Taylor M.S."/>
            <person name="Tegner J."/>
            <person name="Teichmann S.A."/>
            <person name="Ueda H.R."/>
            <person name="van Nimwegen E."/>
            <person name="Verardo R."/>
            <person name="Wei C.L."/>
            <person name="Yagi K."/>
            <person name="Yamanishi H."/>
            <person name="Zabarovsky E."/>
            <person name="Zhu S."/>
            <person name="Zimmer A."/>
            <person name="Hide W."/>
            <person name="Bult C."/>
            <person name="Grimmond S.M."/>
            <person name="Teasdale R.D."/>
            <person name="Liu E.T."/>
            <person name="Brusic V."/>
            <person name="Quackenbush J."/>
            <person name="Wahlestedt C."/>
            <person name="Mattick J.S."/>
            <person name="Hume D.A."/>
            <person name="Kai C."/>
            <person name="Sasaki D."/>
            <person name="Tomaru Y."/>
            <person name="Fukuda S."/>
            <person name="Kanamori-Katayama M."/>
            <person name="Suzuki M."/>
            <person name="Aoki J."/>
            <person name="Arakawa T."/>
            <person name="Iida J."/>
            <person name="Imamura K."/>
            <person name="Itoh M."/>
            <person name="Kato T."/>
            <person name="Kawaji H."/>
            <person name="Kawagashira N."/>
            <person name="Kawashima T."/>
            <person name="Kojima M."/>
            <person name="Kondo S."/>
            <person name="Konno H."/>
            <person name="Nakano K."/>
            <person name="Ninomiya N."/>
            <person name="Nishio T."/>
            <person name="Okada M."/>
            <person name="Plessy C."/>
            <person name="Shibata K."/>
            <person name="Shiraki T."/>
            <person name="Suzuki S."/>
            <person name="Tagami M."/>
            <person name="Waki K."/>
            <person name="Watahiki A."/>
            <person name="Okamura-Oho Y."/>
            <person name="Suzuki H."/>
            <person name="Kawai J."/>
            <person name="Hayashizaki Y."/>
        </authorList>
    </citation>
    <scope>NUCLEOTIDE SEQUENCE [LARGE SCALE MRNA] (ISOFORM 2)</scope>
    <source>
        <strain>C57BL/6J</strain>
    </source>
</reference>
<reference key="3">
    <citation type="journal article" date="2004" name="Genome Res.">
        <title>The status, quality, and expansion of the NIH full-length cDNA project: the Mammalian Gene Collection (MGC).</title>
        <authorList>
            <consortium name="The MGC Project Team"/>
        </authorList>
    </citation>
    <scope>NUCLEOTIDE SEQUENCE [LARGE SCALE MRNA] OF 179-378 (ISOFORM 1)</scope>
    <source>
        <strain>C57BL/6J</strain>
        <tissue>Thymus</tissue>
    </source>
</reference>
<name>PBX4_MOUSE</name>
<sequence length="378" mass="41961">MAAPLRPVPPQPAPRRLPTTAPLGHDTSDVLQQIMAITDQSLDEAQARKHALNCHRMKSALFSVLCEIKGKTAVSIQFQEEDPPDAQLLRLDNMLLAEGVSRPEKRGRGAAAGSTATPGGCPNDNSIEHSDYRAKLSQIRQIYHSELEKYEQACREFTTHVTNLLREQSRVRPVSCREMEHMVNTIQSKFSAIQRQLKQSTCEAVMTLRSRFLDARRKRRNFSKQATDVLNEYFYSHLSNPYPSEETKEELARKGGITVSQVSNWFGNKRIRYKKNTGKFQEEATMYTGKASTVTKARRPRGQSSCQSTPSPGPCGPLPLTNGSDVVLTLRTLAFLQPPTGGVCLQPLVHSNWQRAAPQPASSPAGESGSFNWDAASN</sequence>
<keyword id="KW-0010">Activator</keyword>
<keyword id="KW-0025">Alternative splicing</keyword>
<keyword id="KW-0238">DNA-binding</keyword>
<keyword id="KW-0371">Homeobox</keyword>
<keyword id="KW-0539">Nucleus</keyword>
<keyword id="KW-1185">Reference proteome</keyword>
<keyword id="KW-0804">Transcription</keyword>
<keyword id="KW-0805">Transcription regulation</keyword>